<evidence type="ECO:0000255" key="1">
    <source>
        <dbReference type="HAMAP-Rule" id="MF_01164"/>
    </source>
</evidence>
<proteinExistence type="inferred from homology"/>
<comment type="function">
    <text evidence="1">Catalyzes the transfer of 4-deoxy-4-formamido-L-arabinose from UDP to undecaprenyl phosphate. The modified arabinose is attached to lipid A and is required for resistance to polymyxin and cationic antimicrobial peptides.</text>
</comment>
<comment type="catalytic activity">
    <reaction evidence="1">
        <text>UDP-4-deoxy-4-formamido-beta-L-arabinose + di-trans,octa-cis-undecaprenyl phosphate = 4-deoxy-4-formamido-alpha-L-arabinopyranosyl di-trans,octa-cis-undecaprenyl phosphate + UDP</text>
        <dbReference type="Rhea" id="RHEA:27722"/>
        <dbReference type="ChEBI" id="CHEBI:58223"/>
        <dbReference type="ChEBI" id="CHEBI:58709"/>
        <dbReference type="ChEBI" id="CHEBI:58909"/>
        <dbReference type="ChEBI" id="CHEBI:60392"/>
        <dbReference type="EC" id="2.4.2.53"/>
    </reaction>
</comment>
<comment type="pathway">
    <text evidence="1">Glycolipid biosynthesis; 4-amino-4-deoxy-alpha-L-arabinose undecaprenyl phosphate biosynthesis; 4-amino-4-deoxy-alpha-L-arabinose undecaprenyl phosphate from UDP-4-deoxy-4-formamido-beta-L-arabinose and undecaprenyl phosphate: step 1/2.</text>
</comment>
<comment type="pathway">
    <text evidence="1">Bacterial outer membrane biogenesis; lipopolysaccharide biosynthesis.</text>
</comment>
<comment type="subcellular location">
    <subcellularLocation>
        <location evidence="1">Cell inner membrane</location>
        <topology evidence="1">Multi-pass membrane protein</topology>
    </subcellularLocation>
</comment>
<comment type="similarity">
    <text evidence="1">Belongs to the glycosyltransferase 2 family.</text>
</comment>
<reference key="1">
    <citation type="journal article" date="2005" name="Nucleic Acids Res.">
        <title>The genome sequence of Salmonella enterica serovar Choleraesuis, a highly invasive and resistant zoonotic pathogen.</title>
        <authorList>
            <person name="Chiu C.-H."/>
            <person name="Tang P."/>
            <person name="Chu C."/>
            <person name="Hu S."/>
            <person name="Bao Q."/>
            <person name="Yu J."/>
            <person name="Chou Y.-Y."/>
            <person name="Wang H.-S."/>
            <person name="Lee Y.-S."/>
        </authorList>
    </citation>
    <scope>NUCLEOTIDE SEQUENCE [LARGE SCALE GENOMIC DNA]</scope>
    <source>
        <strain>SC-B67</strain>
    </source>
</reference>
<sequence length="327" mass="36546">MFDAAPIKKVSVVIPVYNEQESLPELIRRTTTACESLSKAWEILLIDDGSSDSSAELMVKASQEADSHIISILLNRNYGQHAAIMAGFSHVSGDLIITLDADLQNPPEEIPRLVAKADEGFDVVGTVRQNRQDSLFRKSASKIINLLIQRTTGKAMGDYGCMLRAYRRPIIDTMLRCHERSTFIPILANIFARRATEIPVHHAEREFGDSKYSFMRLINLMYDLVTCLTTTPLRLLSLLGSVIAIGGFSLSVLLIVLRLALGPQWAAEGVFMLFAVLFTFIGAQFIGMGLLGEYIGRIYNDVRARPRYFVQQVIYPESTPFTEESHQ</sequence>
<accession>Q57M56</accession>
<gene>
    <name evidence="1" type="primary">arnC</name>
    <name type="ordered locus">SCH_2300</name>
</gene>
<protein>
    <recommendedName>
        <fullName evidence="1">Undecaprenyl-phosphate 4-deoxy-4-formamido-L-arabinose transferase</fullName>
        <ecNumber evidence="1">2.4.2.53</ecNumber>
    </recommendedName>
    <alternativeName>
        <fullName evidence="1">Undecaprenyl-phosphate Ara4FN transferase</fullName>
        <shortName evidence="1">Ara4FN transferase</shortName>
    </alternativeName>
</protein>
<feature type="chain" id="PRO_0000059200" description="Undecaprenyl-phosphate 4-deoxy-4-formamido-L-arabinose transferase">
    <location>
        <begin position="1"/>
        <end position="327"/>
    </location>
</feature>
<feature type="topological domain" description="Cytoplasmic" evidence="1">
    <location>
        <begin position="1"/>
        <end position="235"/>
    </location>
</feature>
<feature type="transmembrane region" description="Helical" evidence="1">
    <location>
        <begin position="236"/>
        <end position="256"/>
    </location>
</feature>
<feature type="topological domain" description="Periplasmic" evidence="1">
    <location>
        <begin position="257"/>
        <end position="269"/>
    </location>
</feature>
<feature type="transmembrane region" description="Helical" evidence="1">
    <location>
        <begin position="270"/>
        <end position="290"/>
    </location>
</feature>
<feature type="topological domain" description="Cytoplasmic" evidence="1">
    <location>
        <begin position="291"/>
        <end position="327"/>
    </location>
</feature>
<keyword id="KW-0046">Antibiotic resistance</keyword>
<keyword id="KW-0997">Cell inner membrane</keyword>
<keyword id="KW-1003">Cell membrane</keyword>
<keyword id="KW-0328">Glycosyltransferase</keyword>
<keyword id="KW-0441">Lipid A biosynthesis</keyword>
<keyword id="KW-0444">Lipid biosynthesis</keyword>
<keyword id="KW-0443">Lipid metabolism</keyword>
<keyword id="KW-0448">Lipopolysaccharide biosynthesis</keyword>
<keyword id="KW-0472">Membrane</keyword>
<keyword id="KW-0808">Transferase</keyword>
<keyword id="KW-0812">Transmembrane</keyword>
<keyword id="KW-1133">Transmembrane helix</keyword>
<name>ARNC_SALCH</name>
<dbReference type="EC" id="2.4.2.53" evidence="1"/>
<dbReference type="EMBL" id="AE017220">
    <property type="protein sequence ID" value="AAX66206.1"/>
    <property type="molecule type" value="Genomic_DNA"/>
</dbReference>
<dbReference type="RefSeq" id="WP_001540501.1">
    <property type="nucleotide sequence ID" value="NC_006905.1"/>
</dbReference>
<dbReference type="SMR" id="Q57M56"/>
<dbReference type="CAZy" id="GT2">
    <property type="family name" value="Glycosyltransferase Family 2"/>
</dbReference>
<dbReference type="KEGG" id="sec:SCH_2300"/>
<dbReference type="HOGENOM" id="CLU_033536_0_0_6"/>
<dbReference type="UniPathway" id="UPA00030"/>
<dbReference type="UniPathway" id="UPA00036">
    <property type="reaction ID" value="UER00495"/>
</dbReference>
<dbReference type="Proteomes" id="UP000000538">
    <property type="component" value="Chromosome"/>
</dbReference>
<dbReference type="GO" id="GO:0005886">
    <property type="term" value="C:plasma membrane"/>
    <property type="evidence" value="ECO:0007669"/>
    <property type="project" value="UniProtKB-SubCell"/>
</dbReference>
<dbReference type="GO" id="GO:0016780">
    <property type="term" value="F:phosphotransferase activity, for other substituted phosphate groups"/>
    <property type="evidence" value="ECO:0007669"/>
    <property type="project" value="UniProtKB-UniRule"/>
</dbReference>
<dbReference type="GO" id="GO:0099621">
    <property type="term" value="F:undecaprenyl-phosphate 4-deoxy-4-formamido-L-arabinose transferase activity"/>
    <property type="evidence" value="ECO:0007669"/>
    <property type="project" value="UniProtKB-EC"/>
</dbReference>
<dbReference type="GO" id="GO:0036108">
    <property type="term" value="P:4-amino-4-deoxy-alpha-L-arabinopyranosyl undecaprenyl phosphate biosynthetic process"/>
    <property type="evidence" value="ECO:0007669"/>
    <property type="project" value="UniProtKB-UniRule"/>
</dbReference>
<dbReference type="GO" id="GO:0009245">
    <property type="term" value="P:lipid A biosynthetic process"/>
    <property type="evidence" value="ECO:0007669"/>
    <property type="project" value="UniProtKB-UniRule"/>
</dbReference>
<dbReference type="GO" id="GO:0009103">
    <property type="term" value="P:lipopolysaccharide biosynthetic process"/>
    <property type="evidence" value="ECO:0007669"/>
    <property type="project" value="UniProtKB-UniRule"/>
</dbReference>
<dbReference type="GO" id="GO:0046677">
    <property type="term" value="P:response to antibiotic"/>
    <property type="evidence" value="ECO:0007669"/>
    <property type="project" value="UniProtKB-KW"/>
</dbReference>
<dbReference type="CDD" id="cd04187">
    <property type="entry name" value="DPM1_like_bac"/>
    <property type="match status" value="1"/>
</dbReference>
<dbReference type="FunFam" id="3.90.550.10:FF:000019">
    <property type="entry name" value="Undecaprenyl-phosphate 4-deoxy-4-formamido-L-arabinose transferase"/>
    <property type="match status" value="1"/>
</dbReference>
<dbReference type="Gene3D" id="3.90.550.10">
    <property type="entry name" value="Spore Coat Polysaccharide Biosynthesis Protein SpsA, Chain A"/>
    <property type="match status" value="1"/>
</dbReference>
<dbReference type="HAMAP" id="MF_01164">
    <property type="entry name" value="ArnC_transfer"/>
    <property type="match status" value="1"/>
</dbReference>
<dbReference type="InterPro" id="IPR022857">
    <property type="entry name" value="ArnC_tfrase"/>
</dbReference>
<dbReference type="InterPro" id="IPR001173">
    <property type="entry name" value="Glyco_trans_2-like"/>
</dbReference>
<dbReference type="InterPro" id="IPR050256">
    <property type="entry name" value="Glycosyltransferase_2"/>
</dbReference>
<dbReference type="InterPro" id="IPR029044">
    <property type="entry name" value="Nucleotide-diphossugar_trans"/>
</dbReference>
<dbReference type="NCBIfam" id="NF007986">
    <property type="entry name" value="PRK10714.1"/>
    <property type="match status" value="1"/>
</dbReference>
<dbReference type="PANTHER" id="PTHR48090:SF3">
    <property type="entry name" value="UNDECAPRENYL-PHOSPHATE 4-DEOXY-4-FORMAMIDO-L-ARABINOSE TRANSFERASE"/>
    <property type="match status" value="1"/>
</dbReference>
<dbReference type="PANTHER" id="PTHR48090">
    <property type="entry name" value="UNDECAPRENYL-PHOSPHATE 4-DEOXY-4-FORMAMIDO-L-ARABINOSE TRANSFERASE-RELATED"/>
    <property type="match status" value="1"/>
</dbReference>
<dbReference type="Pfam" id="PF00535">
    <property type="entry name" value="Glycos_transf_2"/>
    <property type="match status" value="1"/>
</dbReference>
<dbReference type="SUPFAM" id="SSF53448">
    <property type="entry name" value="Nucleotide-diphospho-sugar transferases"/>
    <property type="match status" value="1"/>
</dbReference>
<organism>
    <name type="scientific">Salmonella choleraesuis (strain SC-B67)</name>
    <dbReference type="NCBI Taxonomy" id="321314"/>
    <lineage>
        <taxon>Bacteria</taxon>
        <taxon>Pseudomonadati</taxon>
        <taxon>Pseudomonadota</taxon>
        <taxon>Gammaproteobacteria</taxon>
        <taxon>Enterobacterales</taxon>
        <taxon>Enterobacteriaceae</taxon>
        <taxon>Salmonella</taxon>
    </lineage>
</organism>